<accession>Q8PZI1</accession>
<protein>
    <recommendedName>
        <fullName evidence="2">tRNA-splicing endonuclease</fullName>
        <ecNumber evidence="2">4.6.1.16</ecNumber>
    </recommendedName>
    <alternativeName>
        <fullName evidence="2">tRNA-intron endonuclease</fullName>
    </alternativeName>
</protein>
<reference key="1">
    <citation type="journal article" date="2002" name="J. Mol. Microbiol. Biotechnol.">
        <title>The genome of Methanosarcina mazei: evidence for lateral gene transfer between Bacteria and Archaea.</title>
        <authorList>
            <person name="Deppenmeier U."/>
            <person name="Johann A."/>
            <person name="Hartsch T."/>
            <person name="Merkl R."/>
            <person name="Schmitz R.A."/>
            <person name="Martinez-Arias R."/>
            <person name="Henne A."/>
            <person name="Wiezer A."/>
            <person name="Baeumer S."/>
            <person name="Jacobi C."/>
            <person name="Brueggemann H."/>
            <person name="Lienard T."/>
            <person name="Christmann A."/>
            <person name="Boemecke M."/>
            <person name="Steckel S."/>
            <person name="Bhattacharyya A."/>
            <person name="Lykidis A."/>
            <person name="Overbeek R."/>
            <person name="Klenk H.-P."/>
            <person name="Gunsalus R.P."/>
            <person name="Fritz H.-J."/>
            <person name="Gottschalk G."/>
        </authorList>
    </citation>
    <scope>NUCLEOTIDE SEQUENCE [LARGE SCALE GENOMIC DNA]</scope>
    <source>
        <strain>ATCC BAA-159 / DSM 3647 / Goe1 / Go1 / JCM 11833 / OCM 88</strain>
    </source>
</reference>
<keyword id="KW-0456">Lyase</keyword>
<keyword id="KW-0819">tRNA processing</keyword>
<proteinExistence type="inferred from homology"/>
<comment type="function">
    <text evidence="1">Endonuclease that removes tRNA introns. Cleaves pre-tRNA at the 5'- and 3'-splice sites to release the intron. The products are an intron and two tRNA half-molecules bearing 2',3' cyclic phosphate and 5'-OH termini. Recognizes a pseudosymmetric substrate in which 2 bulged loops of 3 bases are separated by a stem of 4 bp (By similarity).</text>
</comment>
<comment type="catalytic activity">
    <reaction evidence="2">
        <text>pretRNA = a 3'-half-tRNA molecule with a 5'-OH end + a 5'-half-tRNA molecule with a 2',3'-cyclic phosphate end + an intron with a 2',3'-cyclic phosphate and a 5'-hydroxyl terminus.</text>
        <dbReference type="EC" id="4.6.1.16"/>
    </reaction>
</comment>
<comment type="subunit">
    <text evidence="2">Homodimer.</text>
</comment>
<comment type="similarity">
    <text evidence="2">Belongs to the tRNA-intron endonuclease family. Archaeal long subfamily.</text>
</comment>
<name>ENDA_METMA</name>
<organism>
    <name type="scientific">Methanosarcina mazei (strain ATCC BAA-159 / DSM 3647 / Goe1 / Go1 / JCM 11833 / OCM 88)</name>
    <name type="common">Methanosarcina frisia</name>
    <dbReference type="NCBI Taxonomy" id="192952"/>
    <lineage>
        <taxon>Archaea</taxon>
        <taxon>Methanobacteriati</taxon>
        <taxon>Methanobacteriota</taxon>
        <taxon>Stenosarchaea group</taxon>
        <taxon>Methanomicrobia</taxon>
        <taxon>Methanosarcinales</taxon>
        <taxon>Methanosarcinaceae</taxon>
        <taxon>Methanosarcina</taxon>
    </lineage>
</organism>
<evidence type="ECO:0000250" key="1"/>
<evidence type="ECO:0000255" key="2">
    <source>
        <dbReference type="HAMAP-Rule" id="MF_01834"/>
    </source>
</evidence>
<gene>
    <name evidence="2" type="primary">endA</name>
    <name type="ordered locus">MM_0512</name>
</gene>
<dbReference type="EC" id="4.6.1.16" evidence="2"/>
<dbReference type="EMBL" id="AE008384">
    <property type="protein sequence ID" value="AAM30208.1"/>
    <property type="molecule type" value="Genomic_DNA"/>
</dbReference>
<dbReference type="SMR" id="Q8PZI1"/>
<dbReference type="KEGG" id="mma:MM_0512"/>
<dbReference type="PATRIC" id="fig|192952.21.peg.610"/>
<dbReference type="eggNOG" id="arCOG01701">
    <property type="taxonomic scope" value="Archaea"/>
</dbReference>
<dbReference type="HOGENOM" id="CLU_791347_0_0_2"/>
<dbReference type="Proteomes" id="UP000000595">
    <property type="component" value="Chromosome"/>
</dbReference>
<dbReference type="GO" id="GO:0005737">
    <property type="term" value="C:cytoplasm"/>
    <property type="evidence" value="ECO:0007669"/>
    <property type="project" value="TreeGrafter"/>
</dbReference>
<dbReference type="GO" id="GO:0016829">
    <property type="term" value="F:lyase activity"/>
    <property type="evidence" value="ECO:0007669"/>
    <property type="project" value="UniProtKB-KW"/>
</dbReference>
<dbReference type="GO" id="GO:0003676">
    <property type="term" value="F:nucleic acid binding"/>
    <property type="evidence" value="ECO:0007669"/>
    <property type="project" value="InterPro"/>
</dbReference>
<dbReference type="GO" id="GO:0000213">
    <property type="term" value="F:tRNA-intron endonuclease activity"/>
    <property type="evidence" value="ECO:0007669"/>
    <property type="project" value="UniProtKB-UniRule"/>
</dbReference>
<dbReference type="GO" id="GO:0006388">
    <property type="term" value="P:tRNA splicing, via endonucleolytic cleavage and ligation"/>
    <property type="evidence" value="ECO:0007669"/>
    <property type="project" value="UniProtKB-UniRule"/>
</dbReference>
<dbReference type="CDD" id="cd22363">
    <property type="entry name" value="tRNA-intron_lyase_C"/>
    <property type="match status" value="2"/>
</dbReference>
<dbReference type="FunFam" id="3.40.1170.20:FF:000001">
    <property type="entry name" value="tRNA-splicing endonuclease"/>
    <property type="match status" value="1"/>
</dbReference>
<dbReference type="FunFam" id="3.40.1350.10:FF:000006">
    <property type="entry name" value="tRNA-splicing endonuclease"/>
    <property type="match status" value="1"/>
</dbReference>
<dbReference type="Gene3D" id="3.40.1350.10">
    <property type="match status" value="1"/>
</dbReference>
<dbReference type="Gene3D" id="3.40.1350.150">
    <property type="match status" value="1"/>
</dbReference>
<dbReference type="Gene3D" id="3.40.1170.20">
    <property type="entry name" value="tRNA intron endonuclease, N-terminal domain"/>
    <property type="match status" value="1"/>
</dbReference>
<dbReference type="HAMAP" id="MF_01834">
    <property type="entry name" value="EndA_long"/>
    <property type="match status" value="1"/>
</dbReference>
<dbReference type="InterPro" id="IPR011856">
    <property type="entry name" value="tRNA_endonuc-like_dom_sf"/>
</dbReference>
<dbReference type="InterPro" id="IPR036167">
    <property type="entry name" value="tRNA_intron_Endo_cat-like_sf"/>
</dbReference>
<dbReference type="InterPro" id="IPR006677">
    <property type="entry name" value="tRNA_intron_Endonuc_cat-like"/>
</dbReference>
<dbReference type="InterPro" id="IPR006678">
    <property type="entry name" value="tRNA_intron_Endonuc_N"/>
</dbReference>
<dbReference type="InterPro" id="IPR036740">
    <property type="entry name" value="tRNA_intron_Endonuc_N_sf"/>
</dbReference>
<dbReference type="InterPro" id="IPR006676">
    <property type="entry name" value="tRNA_splic"/>
</dbReference>
<dbReference type="InterPro" id="IPR023516">
    <property type="entry name" value="tRNA_splic_arch_long"/>
</dbReference>
<dbReference type="NCBIfam" id="TIGR00324">
    <property type="entry name" value="endA"/>
    <property type="match status" value="2"/>
</dbReference>
<dbReference type="NCBIfam" id="NF006795">
    <property type="entry name" value="PRK09300.1-3"/>
    <property type="match status" value="1"/>
</dbReference>
<dbReference type="PANTHER" id="PTHR21227">
    <property type="entry name" value="TRNA-SPLICING ENDONUCLEASE SUBUNIT SEN2"/>
    <property type="match status" value="1"/>
</dbReference>
<dbReference type="PANTHER" id="PTHR21227:SF0">
    <property type="entry name" value="TRNA-SPLICING ENDONUCLEASE SUBUNIT SEN2"/>
    <property type="match status" value="1"/>
</dbReference>
<dbReference type="Pfam" id="PF01974">
    <property type="entry name" value="tRNA_int_endo"/>
    <property type="match status" value="2"/>
</dbReference>
<dbReference type="Pfam" id="PF02778">
    <property type="entry name" value="tRNA_int_endo_N"/>
    <property type="match status" value="2"/>
</dbReference>
<dbReference type="SUPFAM" id="SSF53032">
    <property type="entry name" value="tRNA-intron endonuclease catalytic domain-like"/>
    <property type="match status" value="2"/>
</dbReference>
<dbReference type="SUPFAM" id="SSF55267">
    <property type="entry name" value="tRNA-intron endonuclease N-terminal domain-like"/>
    <property type="match status" value="2"/>
</dbReference>
<sequence length="353" mass="40191">MNLLKTQLKGDRVLAGKEAVAELYKTGYFGRPKDDGLELSLVEAAYLQSRGKLDIELEGKLLGFRAFFEQASLRQQNFELKYIVYKDLKERGYYVQPSAADFRVYPRGSHPGKSAAKIFVHVLSERQPLSVKLLQESVASAENVHKQFILAVVDEESDLTFYEIKSASPKGEMPEPFPAVKADATFLEDRVIAWDAEASGALYSRGFYGKMLDPERLQLSLVESLYLFSRGVIVVRDRKGKIFSFDEFVEKASEIEGSFLRKYSAYKALRDSGHVVKTGFKFGTHFRVYRKVESIEKIPHSEYLVNVIPEDYEFRLPVMSGAVRLANSVRKRMLFAVEKGEEVEYLDIGRVKM</sequence>
<feature type="chain" id="PRO_0000109488" description="tRNA-splicing endonuclease">
    <location>
        <begin position="1"/>
        <end position="353"/>
    </location>
</feature>
<feature type="active site" evidence="2">
    <location>
        <position position="289"/>
    </location>
</feature>
<feature type="active site" evidence="2">
    <location>
        <position position="300"/>
    </location>
</feature>
<feature type="active site" evidence="2">
    <location>
        <position position="331"/>
    </location>
</feature>